<protein>
    <recommendedName>
        <fullName evidence="5">Glucose oxidase-like protein fsoC</fullName>
        <ecNumber evidence="4">1.-.-.-</ecNumber>
    </recommendedName>
    <alternativeName>
        <fullName evidence="5">Fuscoatroside biosynthesis cluster protein C</fullName>
    </alternativeName>
</protein>
<name>FSOC_HUMFU</name>
<sequence>MVYLAILLALAHTVGRSAAGAVDSFDYIIVGAGTSGLVVANRLSEDPSVTVAVIEPGTDQRDNINVTSTTAFGNSFGTAIDWAYSTTKQHEAGNKELPLHAGKAWGGTSTINGMTYIRGNVAEFDAWERLGNPGWNWAALLPYFKKSERYHIPTESQLAAGATFESRYHGFDGPLHVGYIPALENGSYAPLVIDTWEGLSVAHNPDLNSGSVRGFGMGPQTLDTGSNVRWDAARAYYHPVEQRSNLRILKGTVKRITWAKGKGKKGTLVANGVEVLNEKGKSTTLAAKTEVVVSAGALRTPLVLEASGIGNPRILKSLGVETQISLPGVGENLVEQPSHFLSFSANLPIAWSAYHAYVTASDIFGANTSAVEAETRANIPRYARAAAEASGAGSVNARAVEKLLQVQHELIFKHNATVAEILISIYGGGFSNYWTLFPFSRGSVHLKSLDHINEPMVDPRIFLADFDLFTLTAAGKFTKRFWFSEPMKTQASVTGPVGLPHNATDEQWHANLRDTVSANSHPIGTAAMMARDLGGVVDKELKVYGTANVRVVDASVIPMQVSGHLTAALYGVAERAADIIKGAAH</sequence>
<comment type="function">
    <text evidence="4">Glucose oxidase-like protein; part of the gene cluster that mediates the biosynthesis of the enfumafungin-type antibiotic fuscoatroside (PubMed:38654452). Four enzymes are sufficient to produce fuscoatroside: the terpene cyclase-glycosyl transferase fusion protein fsoAthe cytochrome P450 monoxygenases fsoD and fsoE, and the acetyltransferase fsoF; the cytochrome P450 monooxygenase fsoB and the glucose oxidase-like protein fsoC do not seem to play a role in biosynthesis of fuscoatroside (PubMed:38654452).</text>
</comment>
<comment type="function">
    <text evidence="4">Glucose oxidase; part of the gene cluster that mediates the biosynthesis of the enfumafungin-type antibiotic, fuscoatroside.</text>
</comment>
<comment type="cofactor">
    <cofactor evidence="1">
        <name>FAD</name>
        <dbReference type="ChEBI" id="CHEBI:57692"/>
    </cofactor>
    <text evidence="1">Binds 1 FAD per subunit.</text>
</comment>
<comment type="subunit">
    <text evidence="1">Monomer.</text>
</comment>
<comment type="similarity">
    <text evidence="6">Belongs to the GMC oxidoreductase family.</text>
</comment>
<feature type="chain" id="PRO_0000461500" description="Glucose oxidase-like protein fsoC">
    <location>
        <begin position="1"/>
        <end position="585"/>
    </location>
</feature>
<feature type="active site" description="Proton donor" evidence="2">
    <location>
        <position position="521"/>
    </location>
</feature>
<feature type="active site" description="Proton acceptor" evidence="2">
    <location>
        <position position="564"/>
    </location>
</feature>
<feature type="binding site" evidence="3">
    <location>
        <position position="104"/>
    </location>
    <ligand>
        <name>FAD</name>
        <dbReference type="ChEBI" id="CHEBI:57692"/>
    </ligand>
</feature>
<gene>
    <name evidence="5" type="primary">fsoC</name>
</gene>
<proteinExistence type="inferred from homology"/>
<dbReference type="EC" id="1.-.-.-" evidence="4"/>
<dbReference type="EMBL" id="OR962264">
    <property type="protein sequence ID" value="XAF84277.1"/>
    <property type="molecule type" value="Genomic_DNA"/>
</dbReference>
<dbReference type="SMR" id="P9WEH2"/>
<dbReference type="GO" id="GO:0050660">
    <property type="term" value="F:flavin adenine dinucleotide binding"/>
    <property type="evidence" value="ECO:0007669"/>
    <property type="project" value="InterPro"/>
</dbReference>
<dbReference type="GO" id="GO:0008289">
    <property type="term" value="F:lipid binding"/>
    <property type="evidence" value="ECO:0007669"/>
    <property type="project" value="UniProtKB-KW"/>
</dbReference>
<dbReference type="GO" id="GO:0016614">
    <property type="term" value="F:oxidoreductase activity, acting on CH-OH group of donors"/>
    <property type="evidence" value="ECO:0007669"/>
    <property type="project" value="InterPro"/>
</dbReference>
<dbReference type="Gene3D" id="3.50.50.60">
    <property type="entry name" value="FAD/NAD(P)-binding domain"/>
    <property type="match status" value="1"/>
</dbReference>
<dbReference type="Gene3D" id="4.10.450.10">
    <property type="entry name" value="Glucose Oxidase, domain 2"/>
    <property type="match status" value="1"/>
</dbReference>
<dbReference type="Gene3D" id="3.30.560.10">
    <property type="entry name" value="Glucose Oxidase, domain 3"/>
    <property type="match status" value="1"/>
</dbReference>
<dbReference type="InterPro" id="IPR036188">
    <property type="entry name" value="FAD/NAD-bd_sf"/>
</dbReference>
<dbReference type="InterPro" id="IPR027424">
    <property type="entry name" value="Glucose_Oxidase_domain_2"/>
</dbReference>
<dbReference type="InterPro" id="IPR012132">
    <property type="entry name" value="GMC_OxRdtase"/>
</dbReference>
<dbReference type="InterPro" id="IPR000172">
    <property type="entry name" value="GMC_OxRdtase_N"/>
</dbReference>
<dbReference type="InterPro" id="IPR007867">
    <property type="entry name" value="GMC_OxRtase_C"/>
</dbReference>
<dbReference type="PANTHER" id="PTHR11552">
    <property type="entry name" value="GLUCOSE-METHANOL-CHOLINE GMC OXIDOREDUCTASE"/>
    <property type="match status" value="1"/>
</dbReference>
<dbReference type="PANTHER" id="PTHR11552:SF201">
    <property type="entry name" value="GLUCOSE-METHANOL-CHOLINE OXIDOREDUCTASE N-TERMINAL DOMAIN-CONTAINING PROTEIN"/>
    <property type="match status" value="1"/>
</dbReference>
<dbReference type="Pfam" id="PF05199">
    <property type="entry name" value="GMC_oxred_C"/>
    <property type="match status" value="1"/>
</dbReference>
<dbReference type="Pfam" id="PF00732">
    <property type="entry name" value="GMC_oxred_N"/>
    <property type="match status" value="1"/>
</dbReference>
<dbReference type="PIRSF" id="PIRSF000137">
    <property type="entry name" value="Alcohol_oxidase"/>
    <property type="match status" value="1"/>
</dbReference>
<dbReference type="SUPFAM" id="SSF54373">
    <property type="entry name" value="FAD-linked reductases, C-terminal domain"/>
    <property type="match status" value="1"/>
</dbReference>
<dbReference type="SUPFAM" id="SSF51905">
    <property type="entry name" value="FAD/NAD(P)-binding domain"/>
    <property type="match status" value="1"/>
</dbReference>
<accession>P9WEH2</accession>
<keyword id="KW-0274">FAD</keyword>
<keyword id="KW-0285">Flavoprotein</keyword>
<keyword id="KW-0446">Lipid-binding</keyword>
<keyword id="KW-0560">Oxidoreductase</keyword>
<evidence type="ECO:0000250" key="1">
    <source>
        <dbReference type="UniProtKB" id="Q5GMY3"/>
    </source>
</evidence>
<evidence type="ECO:0000255" key="2">
    <source>
        <dbReference type="PIRSR" id="PIRSR000137-1"/>
    </source>
</evidence>
<evidence type="ECO:0000255" key="3">
    <source>
        <dbReference type="PIRSR" id="PIRSR000137-2"/>
    </source>
</evidence>
<evidence type="ECO:0000269" key="4">
    <source>
    </source>
</evidence>
<evidence type="ECO:0000303" key="5">
    <source>
    </source>
</evidence>
<evidence type="ECO:0000305" key="6"/>
<organism>
    <name type="scientific">Humicola fuscoatra</name>
    <dbReference type="NCBI Taxonomy" id="112175"/>
    <lineage>
        <taxon>Eukaryota</taxon>
        <taxon>Fungi</taxon>
        <taxon>Dikarya</taxon>
        <taxon>Ascomycota</taxon>
        <taxon>Pezizomycotina</taxon>
        <taxon>Sordariomycetes</taxon>
        <taxon>Sordariomycetidae</taxon>
        <taxon>Sordariales</taxon>
        <taxon>Chaetomiaceae</taxon>
        <taxon>Humicola</taxon>
    </lineage>
</organism>
<reference key="1">
    <citation type="journal article" date="2024" name="J. Am. Chem. Soc.">
        <title>Biosynthesis of Enfumafungin-type Antibiotic Reveals an Unusual Enzymatic Fusion Pattern and Unprecedented C-C Bond Cleavage.</title>
        <authorList>
            <person name="Cao Z.Q."/>
            <person name="Wang G.Q."/>
            <person name="Luo R."/>
            <person name="Gao Y.H."/>
            <person name="Lv J.M."/>
            <person name="Qin S.Y."/>
            <person name="Chen G.D."/>
            <person name="Awakawa T."/>
            <person name="Bao X.F."/>
            <person name="Mei Q.H."/>
            <person name="Yao X.S."/>
            <person name="Hu D."/>
            <person name="Abe I."/>
            <person name="Gao H."/>
        </authorList>
    </citation>
    <scope>NUCLEOTIDE SEQUENCE [GENOMIC DNA]</scope>
    <scope>FUNCTION</scope>
</reference>